<proteinExistence type="inferred from homology"/>
<reference key="1">
    <citation type="journal article" date="2013" name="Proc. Natl. Acad. Sci. U.S.A.">
        <title>Polynucleobacter necessarius, a model for genome reduction in both free-living and symbiotic bacteria.</title>
        <authorList>
            <person name="Boscaro V."/>
            <person name="Felletti M."/>
            <person name="Vannini C."/>
            <person name="Ackerman M.S."/>
            <person name="Chain P.S."/>
            <person name="Malfatti S."/>
            <person name="Vergez L.M."/>
            <person name="Shin M."/>
            <person name="Doak T.G."/>
            <person name="Lynch M."/>
            <person name="Petroni G."/>
        </authorList>
    </citation>
    <scope>NUCLEOTIDE SEQUENCE [LARGE SCALE GENOMIC DNA]</scope>
    <source>
        <strain>STIR1</strain>
    </source>
</reference>
<accession>B1XSD4</accession>
<keyword id="KW-0066">ATP synthesis</keyword>
<keyword id="KW-0067">ATP-binding</keyword>
<keyword id="KW-0997">Cell inner membrane</keyword>
<keyword id="KW-1003">Cell membrane</keyword>
<keyword id="KW-0139">CF(1)</keyword>
<keyword id="KW-0375">Hydrogen ion transport</keyword>
<keyword id="KW-0406">Ion transport</keyword>
<keyword id="KW-0472">Membrane</keyword>
<keyword id="KW-0547">Nucleotide-binding</keyword>
<keyword id="KW-1278">Translocase</keyword>
<keyword id="KW-0813">Transport</keyword>
<sequence length="466" mass="50730">MSNGNIVQCIGPVVDIQFPRDKMPNIYDALTLVDGGEKSFSEKGLTFEVQQQIGDGVVRAIAMGASDGLRRGMEVKSTGKPISVPVGPATLGRIMDVLGRPIDDAGPIATEERRAIHQPAPKFDELSPSVDLLETGIKVIDLVCPFAKGGKVGLFGGAGVGKTVNMMELINNIAKQHSGLSVFAGVGERTREGNDFYHEMKESNVIDKVAMVFGQMNEPPGNRLRVALTGLTMAEAFRDEGRDILFFVDNIYRYTLAGTEVSALLGRMPSAVGYQPTLAEEMGKLQERITSTKTGSVTSIQAVYVPADDLTDPSPATTFLHLDSTVVLSRDIAALGIYPAVDPLDSTSRQLDPQVVGQEHYEVARDVQMTLQRYKELRDIIAILGMDELSPEDKLAVSRARKIQRFLSQPFHVAEVFTGSPGKYVPLKETIRGFKMICSGELDHLPEQAFYMVGSIDEAIEKAKKL</sequence>
<name>ATPB_POLNS</name>
<dbReference type="EC" id="7.1.2.2" evidence="1"/>
<dbReference type="EMBL" id="CP001010">
    <property type="protein sequence ID" value="ACB43352.1"/>
    <property type="molecule type" value="Genomic_DNA"/>
</dbReference>
<dbReference type="SMR" id="B1XSD4"/>
<dbReference type="STRING" id="452638.Pnec_0022"/>
<dbReference type="KEGG" id="pne:Pnec_0022"/>
<dbReference type="eggNOG" id="COG0055">
    <property type="taxonomic scope" value="Bacteria"/>
</dbReference>
<dbReference type="HOGENOM" id="CLU_022398_0_2_4"/>
<dbReference type="OrthoDB" id="9801639at2"/>
<dbReference type="GO" id="GO:0005886">
    <property type="term" value="C:plasma membrane"/>
    <property type="evidence" value="ECO:0007669"/>
    <property type="project" value="UniProtKB-SubCell"/>
</dbReference>
<dbReference type="GO" id="GO:0045259">
    <property type="term" value="C:proton-transporting ATP synthase complex"/>
    <property type="evidence" value="ECO:0007669"/>
    <property type="project" value="UniProtKB-KW"/>
</dbReference>
<dbReference type="GO" id="GO:0005524">
    <property type="term" value="F:ATP binding"/>
    <property type="evidence" value="ECO:0007669"/>
    <property type="project" value="UniProtKB-UniRule"/>
</dbReference>
<dbReference type="GO" id="GO:0016887">
    <property type="term" value="F:ATP hydrolysis activity"/>
    <property type="evidence" value="ECO:0007669"/>
    <property type="project" value="InterPro"/>
</dbReference>
<dbReference type="GO" id="GO:0046933">
    <property type="term" value="F:proton-transporting ATP synthase activity, rotational mechanism"/>
    <property type="evidence" value="ECO:0007669"/>
    <property type="project" value="UniProtKB-UniRule"/>
</dbReference>
<dbReference type="CDD" id="cd18110">
    <property type="entry name" value="ATP-synt_F1_beta_C"/>
    <property type="match status" value="1"/>
</dbReference>
<dbReference type="CDD" id="cd18115">
    <property type="entry name" value="ATP-synt_F1_beta_N"/>
    <property type="match status" value="1"/>
</dbReference>
<dbReference type="CDD" id="cd01133">
    <property type="entry name" value="F1-ATPase_beta_CD"/>
    <property type="match status" value="1"/>
</dbReference>
<dbReference type="FunFam" id="1.10.1140.10:FF:000001">
    <property type="entry name" value="ATP synthase subunit beta"/>
    <property type="match status" value="1"/>
</dbReference>
<dbReference type="FunFam" id="3.40.50.300:FF:000004">
    <property type="entry name" value="ATP synthase subunit beta"/>
    <property type="match status" value="1"/>
</dbReference>
<dbReference type="Gene3D" id="2.40.10.170">
    <property type="match status" value="1"/>
</dbReference>
<dbReference type="Gene3D" id="1.10.1140.10">
    <property type="entry name" value="Bovine Mitochondrial F1-atpase, Atp Synthase Beta Chain, Chain D, domain 3"/>
    <property type="match status" value="1"/>
</dbReference>
<dbReference type="Gene3D" id="3.40.50.300">
    <property type="entry name" value="P-loop containing nucleotide triphosphate hydrolases"/>
    <property type="match status" value="1"/>
</dbReference>
<dbReference type="HAMAP" id="MF_01347">
    <property type="entry name" value="ATP_synth_beta_bact"/>
    <property type="match status" value="1"/>
</dbReference>
<dbReference type="InterPro" id="IPR003593">
    <property type="entry name" value="AAA+_ATPase"/>
</dbReference>
<dbReference type="InterPro" id="IPR055190">
    <property type="entry name" value="ATP-synt_VA_C"/>
</dbReference>
<dbReference type="InterPro" id="IPR005722">
    <property type="entry name" value="ATP_synth_F1_bsu"/>
</dbReference>
<dbReference type="InterPro" id="IPR020003">
    <property type="entry name" value="ATPase_a/bsu_AS"/>
</dbReference>
<dbReference type="InterPro" id="IPR050053">
    <property type="entry name" value="ATPase_alpha/beta_chains"/>
</dbReference>
<dbReference type="InterPro" id="IPR004100">
    <property type="entry name" value="ATPase_F1/V1/A1_a/bsu_N"/>
</dbReference>
<dbReference type="InterPro" id="IPR036121">
    <property type="entry name" value="ATPase_F1/V1/A1_a/bsu_N_sf"/>
</dbReference>
<dbReference type="InterPro" id="IPR000194">
    <property type="entry name" value="ATPase_F1/V1/A1_a/bsu_nucl-bd"/>
</dbReference>
<dbReference type="InterPro" id="IPR024034">
    <property type="entry name" value="ATPase_F1/V1_b/a_C"/>
</dbReference>
<dbReference type="InterPro" id="IPR027417">
    <property type="entry name" value="P-loop_NTPase"/>
</dbReference>
<dbReference type="NCBIfam" id="TIGR01039">
    <property type="entry name" value="atpD"/>
    <property type="match status" value="1"/>
</dbReference>
<dbReference type="PANTHER" id="PTHR15184">
    <property type="entry name" value="ATP SYNTHASE"/>
    <property type="match status" value="1"/>
</dbReference>
<dbReference type="PANTHER" id="PTHR15184:SF71">
    <property type="entry name" value="ATP SYNTHASE SUBUNIT BETA, MITOCHONDRIAL"/>
    <property type="match status" value="1"/>
</dbReference>
<dbReference type="Pfam" id="PF00006">
    <property type="entry name" value="ATP-synt_ab"/>
    <property type="match status" value="1"/>
</dbReference>
<dbReference type="Pfam" id="PF02874">
    <property type="entry name" value="ATP-synt_ab_N"/>
    <property type="match status" value="1"/>
</dbReference>
<dbReference type="Pfam" id="PF22919">
    <property type="entry name" value="ATP-synt_VA_C"/>
    <property type="match status" value="1"/>
</dbReference>
<dbReference type="SMART" id="SM00382">
    <property type="entry name" value="AAA"/>
    <property type="match status" value="1"/>
</dbReference>
<dbReference type="SUPFAM" id="SSF47917">
    <property type="entry name" value="C-terminal domain of alpha and beta subunits of F1 ATP synthase"/>
    <property type="match status" value="1"/>
</dbReference>
<dbReference type="SUPFAM" id="SSF50615">
    <property type="entry name" value="N-terminal domain of alpha and beta subunits of F1 ATP synthase"/>
    <property type="match status" value="1"/>
</dbReference>
<dbReference type="SUPFAM" id="SSF52540">
    <property type="entry name" value="P-loop containing nucleoside triphosphate hydrolases"/>
    <property type="match status" value="1"/>
</dbReference>
<dbReference type="PROSITE" id="PS00152">
    <property type="entry name" value="ATPASE_ALPHA_BETA"/>
    <property type="match status" value="1"/>
</dbReference>
<organism>
    <name type="scientific">Polynucleobacter necessarius subsp. necessarius (strain STIR1)</name>
    <dbReference type="NCBI Taxonomy" id="452638"/>
    <lineage>
        <taxon>Bacteria</taxon>
        <taxon>Pseudomonadati</taxon>
        <taxon>Pseudomonadota</taxon>
        <taxon>Betaproteobacteria</taxon>
        <taxon>Burkholderiales</taxon>
        <taxon>Burkholderiaceae</taxon>
        <taxon>Polynucleobacter</taxon>
    </lineage>
</organism>
<gene>
    <name evidence="1" type="primary">atpD</name>
    <name type="ordered locus">Pnec_0022</name>
</gene>
<protein>
    <recommendedName>
        <fullName evidence="1">ATP synthase subunit beta</fullName>
        <ecNumber evidence="1">7.1.2.2</ecNumber>
    </recommendedName>
    <alternativeName>
        <fullName evidence="1">ATP synthase F1 sector subunit beta</fullName>
    </alternativeName>
    <alternativeName>
        <fullName evidence="1">F-ATPase subunit beta</fullName>
    </alternativeName>
</protein>
<comment type="function">
    <text evidence="1">Produces ATP from ADP in the presence of a proton gradient across the membrane. The catalytic sites are hosted primarily by the beta subunits.</text>
</comment>
<comment type="catalytic activity">
    <reaction evidence="1">
        <text>ATP + H2O + 4 H(+)(in) = ADP + phosphate + 5 H(+)(out)</text>
        <dbReference type="Rhea" id="RHEA:57720"/>
        <dbReference type="ChEBI" id="CHEBI:15377"/>
        <dbReference type="ChEBI" id="CHEBI:15378"/>
        <dbReference type="ChEBI" id="CHEBI:30616"/>
        <dbReference type="ChEBI" id="CHEBI:43474"/>
        <dbReference type="ChEBI" id="CHEBI:456216"/>
        <dbReference type="EC" id="7.1.2.2"/>
    </reaction>
</comment>
<comment type="subunit">
    <text evidence="1">F-type ATPases have 2 components, CF(1) - the catalytic core - and CF(0) - the membrane proton channel. CF(1) has five subunits: alpha(3), beta(3), gamma(1), delta(1), epsilon(1). CF(0) has three main subunits: a(1), b(2) and c(9-12). The alpha and beta chains form an alternating ring which encloses part of the gamma chain. CF(1) is attached to CF(0) by a central stalk formed by the gamma and epsilon chains, while a peripheral stalk is formed by the delta and b chains.</text>
</comment>
<comment type="subcellular location">
    <subcellularLocation>
        <location evidence="1">Cell inner membrane</location>
        <topology evidence="1">Peripheral membrane protein</topology>
    </subcellularLocation>
</comment>
<comment type="similarity">
    <text evidence="1">Belongs to the ATPase alpha/beta chains family.</text>
</comment>
<evidence type="ECO:0000255" key="1">
    <source>
        <dbReference type="HAMAP-Rule" id="MF_01347"/>
    </source>
</evidence>
<feature type="chain" id="PRO_1000143530" description="ATP synthase subunit beta">
    <location>
        <begin position="1"/>
        <end position="466"/>
    </location>
</feature>
<feature type="binding site" evidence="1">
    <location>
        <begin position="156"/>
        <end position="163"/>
    </location>
    <ligand>
        <name>ATP</name>
        <dbReference type="ChEBI" id="CHEBI:30616"/>
    </ligand>
</feature>